<gene>
    <name evidence="1" type="primary">htpX</name>
    <name type="ordered locus">Rfer_3463</name>
</gene>
<proteinExistence type="inferred from homology"/>
<accession>Q21ST3</accession>
<organism>
    <name type="scientific">Albidiferax ferrireducens (strain ATCC BAA-621 / DSM 15236 / T118)</name>
    <name type="common">Rhodoferax ferrireducens</name>
    <dbReference type="NCBI Taxonomy" id="338969"/>
    <lineage>
        <taxon>Bacteria</taxon>
        <taxon>Pseudomonadati</taxon>
        <taxon>Pseudomonadota</taxon>
        <taxon>Betaproteobacteria</taxon>
        <taxon>Burkholderiales</taxon>
        <taxon>Comamonadaceae</taxon>
        <taxon>Rhodoferax</taxon>
    </lineage>
</organism>
<protein>
    <recommendedName>
        <fullName evidence="1">Protease HtpX homolog</fullName>
        <ecNumber evidence="1">3.4.24.-</ecNumber>
    </recommendedName>
</protein>
<sequence>MKRILLFVLTNVAVVAVLGIVASLLGVNRYLTASGLDLGSLLGFALVIGFGGAIISLLISKPMAKWTTGVRIISQPQNVDEAWIVETVRKLADTAGIGMPEVGIFDGAPNAFATGAFKNSALVAVSTGLLQGMTREEIEAVIGHEVAHVANGDMVTMALIQGVMNTFVVFLSRVIAFAIDGFLRKGDERSSGPGIGYMITTVVLDIVLGFAAAIVVAWFSRHREFRADAGAAKLMNRKQPMINALARLGGMTPGELPKSMAAMGIAGGIGKLFSTHPPIEERIAALQNAPL</sequence>
<dbReference type="EC" id="3.4.24.-" evidence="1"/>
<dbReference type="EMBL" id="CP000267">
    <property type="protein sequence ID" value="ABD71170.1"/>
    <property type="molecule type" value="Genomic_DNA"/>
</dbReference>
<dbReference type="RefSeq" id="WP_011465733.1">
    <property type="nucleotide sequence ID" value="NC_007908.1"/>
</dbReference>
<dbReference type="SMR" id="Q21ST3"/>
<dbReference type="STRING" id="338969.Rfer_3463"/>
<dbReference type="MEROPS" id="M48.002"/>
<dbReference type="KEGG" id="rfr:Rfer_3463"/>
<dbReference type="eggNOG" id="COG0501">
    <property type="taxonomic scope" value="Bacteria"/>
</dbReference>
<dbReference type="HOGENOM" id="CLU_042266_1_0_4"/>
<dbReference type="OrthoDB" id="15218at2"/>
<dbReference type="Proteomes" id="UP000008332">
    <property type="component" value="Chromosome"/>
</dbReference>
<dbReference type="GO" id="GO:0005886">
    <property type="term" value="C:plasma membrane"/>
    <property type="evidence" value="ECO:0007669"/>
    <property type="project" value="UniProtKB-SubCell"/>
</dbReference>
<dbReference type="GO" id="GO:0004222">
    <property type="term" value="F:metalloendopeptidase activity"/>
    <property type="evidence" value="ECO:0007669"/>
    <property type="project" value="UniProtKB-UniRule"/>
</dbReference>
<dbReference type="GO" id="GO:0008270">
    <property type="term" value="F:zinc ion binding"/>
    <property type="evidence" value="ECO:0007669"/>
    <property type="project" value="UniProtKB-UniRule"/>
</dbReference>
<dbReference type="GO" id="GO:0006508">
    <property type="term" value="P:proteolysis"/>
    <property type="evidence" value="ECO:0007669"/>
    <property type="project" value="UniProtKB-KW"/>
</dbReference>
<dbReference type="CDD" id="cd07335">
    <property type="entry name" value="M48B_HtpX_like"/>
    <property type="match status" value="1"/>
</dbReference>
<dbReference type="Gene3D" id="3.30.2010.10">
    <property type="entry name" value="Metalloproteases ('zincins'), catalytic domain"/>
    <property type="match status" value="1"/>
</dbReference>
<dbReference type="HAMAP" id="MF_00188">
    <property type="entry name" value="Pept_M48_protease_HtpX"/>
    <property type="match status" value="1"/>
</dbReference>
<dbReference type="InterPro" id="IPR050083">
    <property type="entry name" value="HtpX_protease"/>
</dbReference>
<dbReference type="InterPro" id="IPR022919">
    <property type="entry name" value="Pept_M48_protease_HtpX"/>
</dbReference>
<dbReference type="InterPro" id="IPR001915">
    <property type="entry name" value="Peptidase_M48"/>
</dbReference>
<dbReference type="NCBIfam" id="NF003965">
    <property type="entry name" value="PRK05457.1"/>
    <property type="match status" value="1"/>
</dbReference>
<dbReference type="PANTHER" id="PTHR43221">
    <property type="entry name" value="PROTEASE HTPX"/>
    <property type="match status" value="1"/>
</dbReference>
<dbReference type="PANTHER" id="PTHR43221:SF1">
    <property type="entry name" value="PROTEASE HTPX"/>
    <property type="match status" value="1"/>
</dbReference>
<dbReference type="Pfam" id="PF01435">
    <property type="entry name" value="Peptidase_M48"/>
    <property type="match status" value="1"/>
</dbReference>
<evidence type="ECO:0000255" key="1">
    <source>
        <dbReference type="HAMAP-Rule" id="MF_00188"/>
    </source>
</evidence>
<reference key="1">
    <citation type="submission" date="2006-02" db="EMBL/GenBank/DDBJ databases">
        <title>Complete sequence of chromosome of Rhodoferax ferrireducens DSM 15236.</title>
        <authorList>
            <person name="Copeland A."/>
            <person name="Lucas S."/>
            <person name="Lapidus A."/>
            <person name="Barry K."/>
            <person name="Detter J.C."/>
            <person name="Glavina del Rio T."/>
            <person name="Hammon N."/>
            <person name="Israni S."/>
            <person name="Pitluck S."/>
            <person name="Brettin T."/>
            <person name="Bruce D."/>
            <person name="Han C."/>
            <person name="Tapia R."/>
            <person name="Gilna P."/>
            <person name="Kiss H."/>
            <person name="Schmutz J."/>
            <person name="Larimer F."/>
            <person name="Land M."/>
            <person name="Kyrpides N."/>
            <person name="Ivanova N."/>
            <person name="Richardson P."/>
        </authorList>
    </citation>
    <scope>NUCLEOTIDE SEQUENCE [LARGE SCALE GENOMIC DNA]</scope>
    <source>
        <strain>ATCC BAA-621 / DSM 15236 / T118</strain>
    </source>
</reference>
<keyword id="KW-0997">Cell inner membrane</keyword>
<keyword id="KW-1003">Cell membrane</keyword>
<keyword id="KW-0378">Hydrolase</keyword>
<keyword id="KW-0472">Membrane</keyword>
<keyword id="KW-0479">Metal-binding</keyword>
<keyword id="KW-0482">Metalloprotease</keyword>
<keyword id="KW-0645">Protease</keyword>
<keyword id="KW-1185">Reference proteome</keyword>
<keyword id="KW-0812">Transmembrane</keyword>
<keyword id="KW-1133">Transmembrane helix</keyword>
<keyword id="KW-0862">Zinc</keyword>
<name>HTPX_ALBFT</name>
<feature type="chain" id="PRO_1000020923" description="Protease HtpX homolog">
    <location>
        <begin position="1"/>
        <end position="291"/>
    </location>
</feature>
<feature type="transmembrane region" description="Helical" evidence="1">
    <location>
        <begin position="4"/>
        <end position="24"/>
    </location>
</feature>
<feature type="transmembrane region" description="Helical" evidence="1">
    <location>
        <begin position="39"/>
        <end position="59"/>
    </location>
</feature>
<feature type="transmembrane region" description="Helical" evidence="1">
    <location>
        <begin position="159"/>
        <end position="179"/>
    </location>
</feature>
<feature type="transmembrane region" description="Helical" evidence="1">
    <location>
        <begin position="199"/>
        <end position="219"/>
    </location>
</feature>
<feature type="active site" evidence="1">
    <location>
        <position position="145"/>
    </location>
</feature>
<feature type="binding site" evidence="1">
    <location>
        <position position="144"/>
    </location>
    <ligand>
        <name>Zn(2+)</name>
        <dbReference type="ChEBI" id="CHEBI:29105"/>
        <note>catalytic</note>
    </ligand>
</feature>
<feature type="binding site" evidence="1">
    <location>
        <position position="148"/>
    </location>
    <ligand>
        <name>Zn(2+)</name>
        <dbReference type="ChEBI" id="CHEBI:29105"/>
        <note>catalytic</note>
    </ligand>
</feature>
<feature type="binding site" evidence="1">
    <location>
        <position position="224"/>
    </location>
    <ligand>
        <name>Zn(2+)</name>
        <dbReference type="ChEBI" id="CHEBI:29105"/>
        <note>catalytic</note>
    </ligand>
</feature>
<comment type="cofactor">
    <cofactor evidence="1">
        <name>Zn(2+)</name>
        <dbReference type="ChEBI" id="CHEBI:29105"/>
    </cofactor>
    <text evidence="1">Binds 1 zinc ion per subunit.</text>
</comment>
<comment type="subcellular location">
    <subcellularLocation>
        <location evidence="1">Cell inner membrane</location>
        <topology evidence="1">Multi-pass membrane protein</topology>
    </subcellularLocation>
</comment>
<comment type="similarity">
    <text evidence="1">Belongs to the peptidase M48B family.</text>
</comment>